<feature type="chain" id="PRO_1000131859" description="Probable Fe(2+)-trafficking protein">
    <location>
        <begin position="1"/>
        <end position="91"/>
    </location>
</feature>
<keyword id="KW-0408">Iron</keyword>
<dbReference type="EMBL" id="AM933172">
    <property type="protein sequence ID" value="CAR34531.1"/>
    <property type="molecule type" value="Genomic_DNA"/>
</dbReference>
<dbReference type="RefSeq" id="WP_000091706.1">
    <property type="nucleotide sequence ID" value="NC_011294.1"/>
</dbReference>
<dbReference type="SMR" id="B5QY87"/>
<dbReference type="KEGG" id="set:SEN2954"/>
<dbReference type="HOGENOM" id="CLU_170994_0_0_6"/>
<dbReference type="Proteomes" id="UP000000613">
    <property type="component" value="Chromosome"/>
</dbReference>
<dbReference type="GO" id="GO:0005829">
    <property type="term" value="C:cytosol"/>
    <property type="evidence" value="ECO:0007669"/>
    <property type="project" value="TreeGrafter"/>
</dbReference>
<dbReference type="GO" id="GO:0005506">
    <property type="term" value="F:iron ion binding"/>
    <property type="evidence" value="ECO:0007669"/>
    <property type="project" value="UniProtKB-UniRule"/>
</dbReference>
<dbReference type="GO" id="GO:0034599">
    <property type="term" value="P:cellular response to oxidative stress"/>
    <property type="evidence" value="ECO:0007669"/>
    <property type="project" value="TreeGrafter"/>
</dbReference>
<dbReference type="FunFam" id="1.10.3880.10:FF:000001">
    <property type="entry name" value="Probable Fe(2+)-trafficking protein"/>
    <property type="match status" value="1"/>
</dbReference>
<dbReference type="Gene3D" id="1.10.3880.10">
    <property type="entry name" value="Fe(II) trafficking protein YggX"/>
    <property type="match status" value="1"/>
</dbReference>
<dbReference type="HAMAP" id="MF_00686">
    <property type="entry name" value="Fe_traffic_YggX"/>
    <property type="match status" value="1"/>
</dbReference>
<dbReference type="InterPro" id="IPR007457">
    <property type="entry name" value="Fe_traffick_prot_YggX"/>
</dbReference>
<dbReference type="InterPro" id="IPR036766">
    <property type="entry name" value="Fe_traffick_prot_YggX_sf"/>
</dbReference>
<dbReference type="NCBIfam" id="NF003817">
    <property type="entry name" value="PRK05408.1"/>
    <property type="match status" value="1"/>
</dbReference>
<dbReference type="PANTHER" id="PTHR36965">
    <property type="entry name" value="FE(2+)-TRAFFICKING PROTEIN-RELATED"/>
    <property type="match status" value="1"/>
</dbReference>
<dbReference type="PANTHER" id="PTHR36965:SF1">
    <property type="entry name" value="FE(2+)-TRAFFICKING PROTEIN-RELATED"/>
    <property type="match status" value="1"/>
</dbReference>
<dbReference type="Pfam" id="PF04362">
    <property type="entry name" value="Iron_traffic"/>
    <property type="match status" value="1"/>
</dbReference>
<dbReference type="PIRSF" id="PIRSF029827">
    <property type="entry name" value="Fe_traffic_YggX"/>
    <property type="match status" value="1"/>
</dbReference>
<dbReference type="SUPFAM" id="SSF111148">
    <property type="entry name" value="YggX-like"/>
    <property type="match status" value="1"/>
</dbReference>
<gene>
    <name evidence="1" type="primary">yggX</name>
    <name type="ordered locus">SEN2954</name>
</gene>
<accession>B5QY87</accession>
<protein>
    <recommendedName>
        <fullName evidence="1">Probable Fe(2+)-trafficking protein</fullName>
    </recommendedName>
</protein>
<comment type="function">
    <text evidence="1">Could be a mediator in iron transactions between iron acquisition and iron-requiring processes, such as synthesis and/or repair of Fe-S clusters in biosynthetic enzymes.</text>
</comment>
<comment type="subunit">
    <text evidence="1">Monomer.</text>
</comment>
<comment type="similarity">
    <text evidence="1">Belongs to the Fe(2+)-trafficking protein family.</text>
</comment>
<evidence type="ECO:0000255" key="1">
    <source>
        <dbReference type="HAMAP-Rule" id="MF_00686"/>
    </source>
</evidence>
<organism>
    <name type="scientific">Salmonella enteritidis PT4 (strain P125109)</name>
    <dbReference type="NCBI Taxonomy" id="550537"/>
    <lineage>
        <taxon>Bacteria</taxon>
        <taxon>Pseudomonadati</taxon>
        <taxon>Pseudomonadota</taxon>
        <taxon>Gammaproteobacteria</taxon>
        <taxon>Enterobacterales</taxon>
        <taxon>Enterobacteriaceae</taxon>
        <taxon>Salmonella</taxon>
    </lineage>
</organism>
<name>FETP_SALEP</name>
<reference key="1">
    <citation type="journal article" date="2008" name="Genome Res.">
        <title>Comparative genome analysis of Salmonella enteritidis PT4 and Salmonella gallinarum 287/91 provides insights into evolutionary and host adaptation pathways.</title>
        <authorList>
            <person name="Thomson N.R."/>
            <person name="Clayton D.J."/>
            <person name="Windhorst D."/>
            <person name="Vernikos G."/>
            <person name="Davidson S."/>
            <person name="Churcher C."/>
            <person name="Quail M.A."/>
            <person name="Stevens M."/>
            <person name="Jones M.A."/>
            <person name="Watson M."/>
            <person name="Barron A."/>
            <person name="Layton A."/>
            <person name="Pickard D."/>
            <person name="Kingsley R.A."/>
            <person name="Bignell A."/>
            <person name="Clark L."/>
            <person name="Harris B."/>
            <person name="Ormond D."/>
            <person name="Abdellah Z."/>
            <person name="Brooks K."/>
            <person name="Cherevach I."/>
            <person name="Chillingworth T."/>
            <person name="Woodward J."/>
            <person name="Norberczak H."/>
            <person name="Lord A."/>
            <person name="Arrowsmith C."/>
            <person name="Jagels K."/>
            <person name="Moule S."/>
            <person name="Mungall K."/>
            <person name="Saunders M."/>
            <person name="Whitehead S."/>
            <person name="Chabalgoity J.A."/>
            <person name="Maskell D."/>
            <person name="Humphreys T."/>
            <person name="Roberts M."/>
            <person name="Barrow P.A."/>
            <person name="Dougan G."/>
            <person name="Parkhill J."/>
        </authorList>
    </citation>
    <scope>NUCLEOTIDE SEQUENCE [LARGE SCALE GENOMIC DNA]</scope>
    <source>
        <strain>P125109</strain>
    </source>
</reference>
<proteinExistence type="inferred from homology"/>
<sequence length="91" mass="10899">MSRTIFCTYLQRDAEGQDFQLYPGELGKRIYNEISKDAWAQWQHKQTMLINEKKLNMMNAEHRKLLEQEMVSFLFEGKDVHIEGYTPEDKK</sequence>